<gene>
    <name type="ORF">ORF5</name>
</gene>
<keyword id="KW-0945">Host-virus interaction</keyword>
<keyword id="KW-1185">Reference proteome</keyword>
<sequence length="83" mass="9494">MDKLISLKDVMRFIFKFGLPGLCIAVGLIVMVANKWLGIPWPCYVIVGSVSLSFGLILFIVQTIKEIIIYRKEKKDENIYSKK</sequence>
<name>C_SPV4</name>
<organismHost>
    <name type="scientific">Spiroplasma melliferum</name>
    <dbReference type="NCBI Taxonomy" id="2134"/>
</organismHost>
<organism>
    <name type="scientific">Spiroplasma virus 4</name>
    <name type="common">SpV4</name>
    <dbReference type="NCBI Taxonomy" id="2928746"/>
    <lineage>
        <taxon>Viruses</taxon>
        <taxon>Monodnaviria</taxon>
        <taxon>Sangervirae</taxon>
        <taxon>Phixviricota</taxon>
        <taxon>Malgrandaviricetes</taxon>
        <taxon>Petitvirales</taxon>
        <taxon>Microviridae</taxon>
        <taxon>Gokushovirinae</taxon>
        <taxon>Spiromicrovirus</taxon>
        <taxon>Spiromicrovirus SpV4</taxon>
    </lineage>
</organism>
<comment type="function">
    <text evidence="1">Plays a central role in the packaging of viral DNA into phage procapsid, which occurs in the late stage of infection. Can interact with the replicative complex after the completion of one round of DNA synthesis. When protein ORF5 is bound to the replicative form, the complex becomes accessible to procapsid and serves as a DNA packaging apparatus (By similarity).</text>
</comment>
<comment type="similarity">
    <text evidence="2">Belongs to the microviridae C protein family.</text>
</comment>
<protein>
    <recommendedName>
        <fullName>Protein ORF5</fullName>
    </recommendedName>
</protein>
<evidence type="ECO:0000250" key="1"/>
<evidence type="ECO:0000305" key="2"/>
<feature type="chain" id="PRO_0000065798" description="Protein ORF5">
    <location>
        <begin position="1"/>
        <end position="83"/>
    </location>
</feature>
<accession>P11337</accession>
<proteinExistence type="inferred from homology"/>
<dbReference type="EMBL" id="M17988">
    <property type="status" value="NOT_ANNOTATED_CDS"/>
    <property type="molecule type" value="Genomic_DNA"/>
</dbReference>
<dbReference type="PIR" id="D29825">
    <property type="entry name" value="G5BPSV"/>
</dbReference>
<dbReference type="SMR" id="P11337"/>
<dbReference type="Proteomes" id="UP000002101">
    <property type="component" value="Genome"/>
</dbReference>
<reference key="1">
    <citation type="journal article" date="1987" name="J. Bacteriol.">
        <title>Spiroplasma virus 4: nucleotide sequence of the viral DNA, regulatory signals, and proposed genome organization.</title>
        <authorList>
            <person name="Renaudin J."/>
            <person name="Pascarel M.-C."/>
            <person name="Bove J.-M."/>
        </authorList>
    </citation>
    <scope>NUCLEOTIDE SEQUENCE [GENOMIC DNA]</scope>
</reference>